<protein>
    <recommendedName>
        <fullName>Allene oxide cyclase 1, chloroplastic</fullName>
        <ecNumber>5.3.99.6</ecNumber>
    </recommendedName>
    <alternativeName>
        <fullName>Early-responsive to dehydration 12 protein</fullName>
    </alternativeName>
</protein>
<keyword id="KW-0002">3D-structure</keyword>
<keyword id="KW-0150">Chloroplast</keyword>
<keyword id="KW-0413">Isomerase</keyword>
<keyword id="KW-0934">Plastid</keyword>
<keyword id="KW-1185">Reference proteome</keyword>
<keyword id="KW-0346">Stress response</keyword>
<keyword id="KW-0809">Transit peptide</keyword>
<feature type="transit peptide" description="Chloroplast" evidence="1">
    <location>
        <begin position="1"/>
        <end position="78"/>
    </location>
</feature>
<feature type="chain" id="PRO_0000001702" description="Allene oxide cyclase 1, chloroplastic">
    <location>
        <begin position="79"/>
        <end position="254"/>
    </location>
</feature>
<feature type="region of interest" description="Disordered" evidence="2">
    <location>
        <begin position="44"/>
        <end position="79"/>
    </location>
</feature>
<feature type="compositionally biased region" description="Low complexity" evidence="2">
    <location>
        <begin position="44"/>
        <end position="56"/>
    </location>
</feature>
<feature type="compositionally biased region" description="Polar residues" evidence="2">
    <location>
        <begin position="65"/>
        <end position="77"/>
    </location>
</feature>
<feature type="strand" evidence="5">
    <location>
        <begin position="83"/>
        <end position="90"/>
    </location>
</feature>
<feature type="strand" evidence="5">
    <location>
        <begin position="114"/>
        <end position="117"/>
    </location>
</feature>
<feature type="strand" evidence="5">
    <location>
        <begin position="120"/>
        <end position="123"/>
    </location>
</feature>
<feature type="strand" evidence="5">
    <location>
        <begin position="129"/>
        <end position="143"/>
    </location>
</feature>
<feature type="turn" evidence="5">
    <location>
        <begin position="144"/>
        <end position="147"/>
    </location>
</feature>
<feature type="strand" evidence="5">
    <location>
        <begin position="148"/>
        <end position="158"/>
    </location>
</feature>
<feature type="helix" evidence="5">
    <location>
        <begin position="160"/>
        <end position="162"/>
    </location>
</feature>
<feature type="strand" evidence="5">
    <location>
        <begin position="163"/>
        <end position="172"/>
    </location>
</feature>
<feature type="strand" evidence="5">
    <location>
        <begin position="177"/>
        <end position="186"/>
    </location>
</feature>
<feature type="turn" evidence="5">
    <location>
        <begin position="187"/>
        <end position="190"/>
    </location>
</feature>
<feature type="strand" evidence="5">
    <location>
        <begin position="192"/>
        <end position="201"/>
    </location>
</feature>
<feature type="turn" evidence="5">
    <location>
        <begin position="202"/>
        <end position="204"/>
    </location>
</feature>
<feature type="strand" evidence="5">
    <location>
        <begin position="205"/>
        <end position="213"/>
    </location>
</feature>
<feature type="helix" evidence="5">
    <location>
        <begin position="221"/>
        <end position="223"/>
    </location>
</feature>
<feature type="helix" evidence="5">
    <location>
        <begin position="238"/>
        <end position="242"/>
    </location>
</feature>
<feature type="helix" evidence="5">
    <location>
        <begin position="245"/>
        <end position="247"/>
    </location>
</feature>
<gene>
    <name type="primary">AOC1</name>
    <name type="synonym">ERD12</name>
    <name type="ordered locus">At3g25760</name>
    <name type="ORF">K13N2.10</name>
    <name type="ORF">K13N2_8</name>
</gene>
<comment type="function">
    <text>Involved in the production of 12-oxo-phytodienoic acid (OPDA), a precursor of jasmonic acid.</text>
</comment>
<comment type="catalytic activity">
    <reaction>
        <text>(9Z,13S,15Z)-12,13-epoxyoctadeca-9,11,15-trienoate = (9S,13S,15Z)-12-oxophyto-10,15-dienoate</text>
        <dbReference type="Rhea" id="RHEA:22592"/>
        <dbReference type="ChEBI" id="CHEBI:36438"/>
        <dbReference type="ChEBI" id="CHEBI:57411"/>
        <dbReference type="EC" id="5.3.99.6"/>
    </reaction>
</comment>
<comment type="subcellular location">
    <subcellularLocation>
        <location evidence="3">Plastid</location>
        <location evidence="3">Chloroplast</location>
    </subcellularLocation>
</comment>
<comment type="tissue specificity">
    <text evidence="3">Highly expressed in fully developed leaves.</text>
</comment>
<comment type="induction">
    <text evidence="3">By dehydration stress. High local and systemic induction by wounding.</text>
</comment>
<comment type="miscellaneous">
    <text>The four allene oxide cyclase proteins (AOC1, AOC2, AOC3 and AOC4) are encoded by duplicated genes. They are very similar, and most experiments involving antibodies do not discriminate between the different members.</text>
</comment>
<comment type="similarity">
    <text evidence="4">Belongs to the allene oxide cyclase family.</text>
</comment>
<proteinExistence type="evidence at protein level"/>
<reference key="1">
    <citation type="journal article" date="2003" name="Plant Mol. Biol.">
        <title>Jasmonate biosynthesis and the allene oxide cyclase family of Arabidopsis thaliana.</title>
        <authorList>
            <person name="Stenzel I."/>
            <person name="Hause B."/>
            <person name="Miersch O."/>
            <person name="Kurz T."/>
            <person name="Maucher H."/>
            <person name="Weichart H."/>
            <person name="Ziegler J."/>
            <person name="Feussner I."/>
            <person name="Wasternack C."/>
        </authorList>
    </citation>
    <scope>NUCLEOTIDE SEQUENCE [MRNA]</scope>
    <scope>TISSUE SPECIFICITY</scope>
    <scope>SUBCELLULAR LOCATION</scope>
    <scope>INDUCTION</scope>
    <source>
        <strain>cv. Columbia</strain>
        <tissue>Leaf</tissue>
    </source>
</reference>
<reference key="2">
    <citation type="journal article" date="2000" name="DNA Res.">
        <title>Structural analysis of Arabidopsis thaliana chromosome 3. I. Sequence features of the regions of 4,504,864 bp covered by sixty P1 and TAC clones.</title>
        <authorList>
            <person name="Sato S."/>
            <person name="Nakamura Y."/>
            <person name="Kaneko T."/>
            <person name="Katoh T."/>
            <person name="Asamizu E."/>
            <person name="Tabata S."/>
        </authorList>
    </citation>
    <scope>NUCLEOTIDE SEQUENCE [LARGE SCALE GENOMIC DNA]</scope>
    <source>
        <strain>cv. Columbia</strain>
    </source>
</reference>
<reference key="3">
    <citation type="journal article" date="2017" name="Plant J.">
        <title>Araport11: a complete reannotation of the Arabidopsis thaliana reference genome.</title>
        <authorList>
            <person name="Cheng C.Y."/>
            <person name="Krishnakumar V."/>
            <person name="Chan A.P."/>
            <person name="Thibaud-Nissen F."/>
            <person name="Schobel S."/>
            <person name="Town C.D."/>
        </authorList>
    </citation>
    <scope>GENOME REANNOTATION</scope>
    <source>
        <strain>cv. Columbia</strain>
    </source>
</reference>
<reference key="4">
    <citation type="submission" date="2004-09" db="EMBL/GenBank/DDBJ databases">
        <title>Large-scale analysis of RIKEN Arabidopsis full-length (RAFL) cDNAs.</title>
        <authorList>
            <person name="Totoki Y."/>
            <person name="Seki M."/>
            <person name="Ishida J."/>
            <person name="Nakajima M."/>
            <person name="Enju A."/>
            <person name="Kamiya A."/>
            <person name="Narusaka M."/>
            <person name="Shin-i T."/>
            <person name="Nakagawa M."/>
            <person name="Sakamoto N."/>
            <person name="Oishi K."/>
            <person name="Kohara Y."/>
            <person name="Kobayashi M."/>
            <person name="Toyoda A."/>
            <person name="Sakaki Y."/>
            <person name="Sakurai T."/>
            <person name="Iida K."/>
            <person name="Akiyama K."/>
            <person name="Satou M."/>
            <person name="Toyoda T."/>
            <person name="Konagaya A."/>
            <person name="Carninci P."/>
            <person name="Kawai J."/>
            <person name="Hayashizaki Y."/>
            <person name="Shinozaki K."/>
        </authorList>
    </citation>
    <scope>NUCLEOTIDE SEQUENCE [LARGE SCALE MRNA]</scope>
    <source>
        <strain>cv. Columbia</strain>
    </source>
</reference>
<reference key="5">
    <citation type="journal article" date="1994" name="Plant Mol. Biol.">
        <title>Cloning of cDNAs for genes that are early-responsive to dehydration stress (ERDs) in Arabidopsis thaliana L.: identification of three ERDs as HSP cognate genes.</title>
        <authorList>
            <person name="Kiyosue T."/>
            <person name="Yamaguchi-shinozaki K."/>
            <person name="Shinozaki K."/>
        </authorList>
    </citation>
    <scope>NUCLEOTIDE SEQUENCE [MRNA] OF 3-254</scope>
</reference>
<reference key="6">
    <citation type="submission" date="2005-06" db="PDB data bank">
        <title>X-ray structure of allene oxide cyclase from Arabidopsis thaliana gene At3g25760.</title>
        <authorList>
            <person name="Wesenberg G.E."/>
            <person name="Phillips G.N. Jr."/>
            <person name="Han B.W."/>
            <person name="Bitto E."/>
            <person name="Bingman C.A."/>
            <person name="Allard S.T.M."/>
        </authorList>
    </citation>
    <scope>X-RAY CRYSTALLOGRAPHY (1.79 ANGSTROMS) OF 67-254</scope>
</reference>
<sequence length="254" mass="27802">MASSTISLQSISMTTLNNLSYSKQFHRSSLLGFSKSFQNFGISSNGPGSSSPTSFTPKKKLTPTRALSQNLGNTENPRPSKVQELSVYEINDLDRHSPKILKNAFSFRFGLGDLVPFTNKLYTGDLKKRVGITAGLCVVIEHVPEKNGDRFEATYSFYFGDYGHLSVQGPYLTYEDSFLAITGGAGIFEGAYGQVKLQQLVYPTKLFYTFYLKGLANDLPLELIGTPVPPSKDVEPAPEAKALKPSGVVSNFTN</sequence>
<evidence type="ECO:0000255" key="1"/>
<evidence type="ECO:0000256" key="2">
    <source>
        <dbReference type="SAM" id="MobiDB-lite"/>
    </source>
</evidence>
<evidence type="ECO:0000269" key="3">
    <source>
    </source>
</evidence>
<evidence type="ECO:0000305" key="4"/>
<evidence type="ECO:0007829" key="5">
    <source>
        <dbReference type="PDB" id="1ZVC"/>
    </source>
</evidence>
<accession>Q9LS03</accession>
<accession>Q94IH9</accession>
<name>AOC1_ARATH</name>
<dbReference type="EC" id="5.3.99.6"/>
<dbReference type="EMBL" id="AJ308483">
    <property type="protein sequence ID" value="CAC83761.1"/>
    <property type="molecule type" value="mRNA"/>
</dbReference>
<dbReference type="EMBL" id="AB028607">
    <property type="protein sequence ID" value="BAA95763.1"/>
    <property type="molecule type" value="Genomic_DNA"/>
</dbReference>
<dbReference type="EMBL" id="CP002686">
    <property type="protein sequence ID" value="AEE77065.1"/>
    <property type="molecule type" value="Genomic_DNA"/>
</dbReference>
<dbReference type="EMBL" id="AK175392">
    <property type="protein sequence ID" value="BAD43155.1"/>
    <property type="molecule type" value="mRNA"/>
</dbReference>
<dbReference type="EMBL" id="AK176777">
    <property type="protein sequence ID" value="BAD44540.1"/>
    <property type="molecule type" value="mRNA"/>
</dbReference>
<dbReference type="EMBL" id="AB039931">
    <property type="protein sequence ID" value="BAB63918.1"/>
    <property type="molecule type" value="mRNA"/>
</dbReference>
<dbReference type="RefSeq" id="NP_189204.1">
    <property type="nucleotide sequence ID" value="NM_113475.5"/>
</dbReference>
<dbReference type="PDB" id="1ZVC">
    <property type="method" value="X-ray"/>
    <property type="resolution" value="1.79 A"/>
    <property type="chains" value="A=67-254"/>
</dbReference>
<dbReference type="PDBsum" id="1ZVC"/>
<dbReference type="SMR" id="Q9LS03"/>
<dbReference type="FunCoup" id="Q9LS03">
    <property type="interactions" value="682"/>
</dbReference>
<dbReference type="STRING" id="3702.Q9LS03"/>
<dbReference type="PaxDb" id="3702-AT3G25760.1"/>
<dbReference type="ProteomicsDB" id="244959"/>
<dbReference type="DNASU" id="822167"/>
<dbReference type="EnsemblPlants" id="AT3G25760.1">
    <property type="protein sequence ID" value="AT3G25760.1"/>
    <property type="gene ID" value="AT3G25760"/>
</dbReference>
<dbReference type="GeneID" id="822167"/>
<dbReference type="Gramene" id="AT3G25760.1">
    <property type="protein sequence ID" value="AT3G25760.1"/>
    <property type="gene ID" value="AT3G25760"/>
</dbReference>
<dbReference type="KEGG" id="ath:AT3G25760"/>
<dbReference type="Araport" id="AT3G25760"/>
<dbReference type="TAIR" id="AT3G25760">
    <property type="gene designation" value="AOC1"/>
</dbReference>
<dbReference type="eggNOG" id="ENOG502QPP8">
    <property type="taxonomic scope" value="Eukaryota"/>
</dbReference>
<dbReference type="HOGENOM" id="CLU_069000_0_0_1"/>
<dbReference type="InParanoid" id="Q9LS03"/>
<dbReference type="OMA" id="CESHAVI"/>
<dbReference type="PhylomeDB" id="Q9LS03"/>
<dbReference type="BioCyc" id="ARA:AT3G25760-MONOMER"/>
<dbReference type="BRENDA" id="5.3.99.6">
    <property type="organism ID" value="399"/>
</dbReference>
<dbReference type="EvolutionaryTrace" id="Q9LS03"/>
<dbReference type="PRO" id="PR:Q9LS03"/>
<dbReference type="Proteomes" id="UP000006548">
    <property type="component" value="Chromosome 3"/>
</dbReference>
<dbReference type="ExpressionAtlas" id="Q9LS03">
    <property type="expression patterns" value="baseline and differential"/>
</dbReference>
<dbReference type="GO" id="GO:0009507">
    <property type="term" value="C:chloroplast"/>
    <property type="evidence" value="ECO:0007005"/>
    <property type="project" value="TAIR"/>
</dbReference>
<dbReference type="GO" id="GO:0009941">
    <property type="term" value="C:chloroplast envelope"/>
    <property type="evidence" value="ECO:0007005"/>
    <property type="project" value="TAIR"/>
</dbReference>
<dbReference type="GO" id="GO:0009535">
    <property type="term" value="C:chloroplast thylakoid membrane"/>
    <property type="evidence" value="ECO:0007005"/>
    <property type="project" value="TAIR"/>
</dbReference>
<dbReference type="GO" id="GO:0005829">
    <property type="term" value="C:cytosol"/>
    <property type="evidence" value="ECO:0007005"/>
    <property type="project" value="TAIR"/>
</dbReference>
<dbReference type="GO" id="GO:0046423">
    <property type="term" value="F:allene-oxide cyclase activity"/>
    <property type="evidence" value="ECO:0000250"/>
    <property type="project" value="TAIR"/>
</dbReference>
<dbReference type="GO" id="GO:0009695">
    <property type="term" value="P:jasmonic acid biosynthetic process"/>
    <property type="evidence" value="ECO:0000304"/>
    <property type="project" value="TAIR"/>
</dbReference>
<dbReference type="FunFam" id="2.40.480.10:FF:000001">
    <property type="entry name" value="Allene oxide cyclase, chloroplastic"/>
    <property type="match status" value="1"/>
</dbReference>
<dbReference type="Gene3D" id="2.40.480.10">
    <property type="entry name" value="Allene oxide cyclase-like"/>
    <property type="match status" value="1"/>
</dbReference>
<dbReference type="InterPro" id="IPR009410">
    <property type="entry name" value="Allene_ox_cyc"/>
</dbReference>
<dbReference type="InterPro" id="IPR044859">
    <property type="entry name" value="Allene_oxi_cyc_Dirigent"/>
</dbReference>
<dbReference type="InterPro" id="IPR034871">
    <property type="entry name" value="Allene_oxi_cyc_sf"/>
</dbReference>
<dbReference type="PANTHER" id="PTHR31843:SF9">
    <property type="entry name" value="ALLENE OXIDE CYCLASE 1, CHLOROPLASTIC-RELATED"/>
    <property type="match status" value="1"/>
</dbReference>
<dbReference type="PANTHER" id="PTHR31843">
    <property type="entry name" value="ALLENE OXIDE CYCLASE 4, CHLOROPLASTIC"/>
    <property type="match status" value="1"/>
</dbReference>
<dbReference type="Pfam" id="PF06351">
    <property type="entry name" value="Allene_ox_cyc"/>
    <property type="match status" value="1"/>
</dbReference>
<dbReference type="SUPFAM" id="SSF141493">
    <property type="entry name" value="Allene oxide cyclase-like"/>
    <property type="match status" value="1"/>
</dbReference>
<organism>
    <name type="scientific">Arabidopsis thaliana</name>
    <name type="common">Mouse-ear cress</name>
    <dbReference type="NCBI Taxonomy" id="3702"/>
    <lineage>
        <taxon>Eukaryota</taxon>
        <taxon>Viridiplantae</taxon>
        <taxon>Streptophyta</taxon>
        <taxon>Embryophyta</taxon>
        <taxon>Tracheophyta</taxon>
        <taxon>Spermatophyta</taxon>
        <taxon>Magnoliopsida</taxon>
        <taxon>eudicotyledons</taxon>
        <taxon>Gunneridae</taxon>
        <taxon>Pentapetalae</taxon>
        <taxon>rosids</taxon>
        <taxon>malvids</taxon>
        <taxon>Brassicales</taxon>
        <taxon>Brassicaceae</taxon>
        <taxon>Camelineae</taxon>
        <taxon>Arabidopsis</taxon>
    </lineage>
</organism>